<feature type="chain" id="PRO_1000145608" description="Agmatinase">
    <location>
        <begin position="1"/>
        <end position="306"/>
    </location>
</feature>
<feature type="binding site" evidence="1">
    <location>
        <position position="126"/>
    </location>
    <ligand>
        <name>Mn(2+)</name>
        <dbReference type="ChEBI" id="CHEBI:29035"/>
    </ligand>
</feature>
<feature type="binding site" evidence="1">
    <location>
        <position position="149"/>
    </location>
    <ligand>
        <name>Mn(2+)</name>
        <dbReference type="ChEBI" id="CHEBI:29035"/>
    </ligand>
</feature>
<feature type="binding site" evidence="1">
    <location>
        <position position="151"/>
    </location>
    <ligand>
        <name>Mn(2+)</name>
        <dbReference type="ChEBI" id="CHEBI:29035"/>
    </ligand>
</feature>
<feature type="binding site" evidence="1">
    <location>
        <position position="153"/>
    </location>
    <ligand>
        <name>Mn(2+)</name>
        <dbReference type="ChEBI" id="CHEBI:29035"/>
    </ligand>
</feature>
<feature type="binding site" evidence="1">
    <location>
        <position position="230"/>
    </location>
    <ligand>
        <name>Mn(2+)</name>
        <dbReference type="ChEBI" id="CHEBI:29035"/>
    </ligand>
</feature>
<feature type="binding site" evidence="1">
    <location>
        <position position="232"/>
    </location>
    <ligand>
        <name>Mn(2+)</name>
        <dbReference type="ChEBI" id="CHEBI:29035"/>
    </ligand>
</feature>
<protein>
    <recommendedName>
        <fullName evidence="1">Agmatinase</fullName>
        <ecNumber evidence="1">3.5.3.11</ecNumber>
    </recommendedName>
    <alternativeName>
        <fullName evidence="1">Agmatine ureohydrolase</fullName>
        <shortName evidence="1">AUH</shortName>
    </alternativeName>
</protein>
<reference key="1">
    <citation type="journal article" date="2011" name="Proc. Natl. Acad. Sci. U.S.A.">
        <title>Genomic anatomy of Escherichia coli O157:H7 outbreaks.</title>
        <authorList>
            <person name="Eppinger M."/>
            <person name="Mammel M.K."/>
            <person name="Leclerc J.E."/>
            <person name="Ravel J."/>
            <person name="Cebula T.A."/>
        </authorList>
    </citation>
    <scope>NUCLEOTIDE SEQUENCE [LARGE SCALE GENOMIC DNA]</scope>
    <source>
        <strain>EC4115 / EHEC</strain>
    </source>
</reference>
<accession>B5YQD4</accession>
<gene>
    <name evidence="1" type="primary">speB</name>
    <name type="ordered locus">ECH74115_4239</name>
</gene>
<name>SPEB_ECO5E</name>
<dbReference type="EC" id="3.5.3.11" evidence="1"/>
<dbReference type="EMBL" id="CP001164">
    <property type="protein sequence ID" value="ACI35219.1"/>
    <property type="molecule type" value="Genomic_DNA"/>
</dbReference>
<dbReference type="RefSeq" id="WP_000105566.1">
    <property type="nucleotide sequence ID" value="NC_011353.1"/>
</dbReference>
<dbReference type="SMR" id="B5YQD4"/>
<dbReference type="GeneID" id="89517749"/>
<dbReference type="KEGG" id="ecf:ECH74115_4239"/>
<dbReference type="HOGENOM" id="CLU_039478_0_0_6"/>
<dbReference type="UniPathway" id="UPA00534">
    <property type="reaction ID" value="UER00287"/>
</dbReference>
<dbReference type="GO" id="GO:0008783">
    <property type="term" value="F:agmatinase activity"/>
    <property type="evidence" value="ECO:0007669"/>
    <property type="project" value="UniProtKB-UniRule"/>
</dbReference>
<dbReference type="GO" id="GO:0030145">
    <property type="term" value="F:manganese ion binding"/>
    <property type="evidence" value="ECO:0007669"/>
    <property type="project" value="InterPro"/>
</dbReference>
<dbReference type="GO" id="GO:0033389">
    <property type="term" value="P:putrescine biosynthetic process from arginine, via agmatine"/>
    <property type="evidence" value="ECO:0007669"/>
    <property type="project" value="TreeGrafter"/>
</dbReference>
<dbReference type="GO" id="GO:0008295">
    <property type="term" value="P:spermidine biosynthetic process"/>
    <property type="evidence" value="ECO:0007669"/>
    <property type="project" value="UniProtKB-UniRule"/>
</dbReference>
<dbReference type="CDD" id="cd11592">
    <property type="entry name" value="Agmatinase_PAH"/>
    <property type="match status" value="1"/>
</dbReference>
<dbReference type="FunFam" id="3.40.800.10:FF:000001">
    <property type="entry name" value="Agmatinase"/>
    <property type="match status" value="1"/>
</dbReference>
<dbReference type="Gene3D" id="3.40.800.10">
    <property type="entry name" value="Ureohydrolase domain"/>
    <property type="match status" value="1"/>
</dbReference>
<dbReference type="HAMAP" id="MF_01418">
    <property type="entry name" value="SpeB"/>
    <property type="match status" value="1"/>
</dbReference>
<dbReference type="InterPro" id="IPR023694">
    <property type="entry name" value="Agmatinase"/>
</dbReference>
<dbReference type="InterPro" id="IPR005925">
    <property type="entry name" value="Agmatinase-rel"/>
</dbReference>
<dbReference type="InterPro" id="IPR006035">
    <property type="entry name" value="Ureohydrolase"/>
</dbReference>
<dbReference type="InterPro" id="IPR023696">
    <property type="entry name" value="Ureohydrolase_dom_sf"/>
</dbReference>
<dbReference type="InterPro" id="IPR020855">
    <property type="entry name" value="Ureohydrolase_Mn_BS"/>
</dbReference>
<dbReference type="NCBIfam" id="TIGR01230">
    <property type="entry name" value="agmatinase"/>
    <property type="match status" value="1"/>
</dbReference>
<dbReference type="NCBIfam" id="NF002564">
    <property type="entry name" value="PRK02190.1"/>
    <property type="match status" value="1"/>
</dbReference>
<dbReference type="PANTHER" id="PTHR11358">
    <property type="entry name" value="ARGINASE/AGMATINASE"/>
    <property type="match status" value="1"/>
</dbReference>
<dbReference type="PANTHER" id="PTHR11358:SF26">
    <property type="entry name" value="GUANIDINO ACID HYDROLASE, MITOCHONDRIAL"/>
    <property type="match status" value="1"/>
</dbReference>
<dbReference type="Pfam" id="PF00491">
    <property type="entry name" value="Arginase"/>
    <property type="match status" value="1"/>
</dbReference>
<dbReference type="PIRSF" id="PIRSF036979">
    <property type="entry name" value="Arginase"/>
    <property type="match status" value="1"/>
</dbReference>
<dbReference type="SUPFAM" id="SSF52768">
    <property type="entry name" value="Arginase/deacetylase"/>
    <property type="match status" value="1"/>
</dbReference>
<dbReference type="PROSITE" id="PS01053">
    <property type="entry name" value="ARGINASE_1"/>
    <property type="match status" value="1"/>
</dbReference>
<dbReference type="PROSITE" id="PS51409">
    <property type="entry name" value="ARGINASE_2"/>
    <property type="match status" value="1"/>
</dbReference>
<proteinExistence type="inferred from homology"/>
<keyword id="KW-0378">Hydrolase</keyword>
<keyword id="KW-0464">Manganese</keyword>
<keyword id="KW-0479">Metal-binding</keyword>
<keyword id="KW-0620">Polyamine biosynthesis</keyword>
<keyword id="KW-0661">Putrescine biosynthesis</keyword>
<keyword id="KW-0745">Spermidine biosynthesis</keyword>
<evidence type="ECO:0000255" key="1">
    <source>
        <dbReference type="HAMAP-Rule" id="MF_01418"/>
    </source>
</evidence>
<organism>
    <name type="scientific">Escherichia coli O157:H7 (strain EC4115 / EHEC)</name>
    <dbReference type="NCBI Taxonomy" id="444450"/>
    <lineage>
        <taxon>Bacteria</taxon>
        <taxon>Pseudomonadati</taxon>
        <taxon>Pseudomonadota</taxon>
        <taxon>Gammaproteobacteria</taxon>
        <taxon>Enterobacterales</taxon>
        <taxon>Enterobacteriaceae</taxon>
        <taxon>Escherichia</taxon>
    </lineage>
</organism>
<sequence>MSTLGHQYDNSLVSNAFGFLRLPMNFQPYDSDADWVITGVPFDMATSGRAGGRHGPAAIRQVSTNLAWEHNRFPWNFDMRERLNVVDCGDLVYAFGDAREMSEKLQAHAEKLLAAGKRMLSFGGDHFVTLPLLRAHAKHFGKMALVHFDAHTDTYANGCEFDHGTMFYTAPKEGLIDPNHSVQIGIRTEFDKDNGFTVLDACQVNDRSVDDVIAQVKQIVGDMPVYLTFDIDCLDPAFAPGTGTPVIGGLTSDRAIKLVRGLKDLNIVGMDVVEVAPAYDQSEITALAAATLALEMLYIQAAKKGE</sequence>
<comment type="function">
    <text evidence="1">Catalyzes the formation of putrescine from agmatine.</text>
</comment>
<comment type="catalytic activity">
    <reaction evidence="1">
        <text>agmatine + H2O = urea + putrescine</text>
        <dbReference type="Rhea" id="RHEA:13929"/>
        <dbReference type="ChEBI" id="CHEBI:15377"/>
        <dbReference type="ChEBI" id="CHEBI:16199"/>
        <dbReference type="ChEBI" id="CHEBI:58145"/>
        <dbReference type="ChEBI" id="CHEBI:326268"/>
        <dbReference type="EC" id="3.5.3.11"/>
    </reaction>
</comment>
<comment type="cofactor">
    <cofactor evidence="1">
        <name>Mn(2+)</name>
        <dbReference type="ChEBI" id="CHEBI:29035"/>
    </cofactor>
</comment>
<comment type="pathway">
    <text evidence="1">Amine and polyamine biosynthesis; putrescine biosynthesis via agmatine pathway; putrescine from agmatine: step 1/1.</text>
</comment>
<comment type="similarity">
    <text evidence="1">Belongs to the arginase family. Agmatinase subfamily.</text>
</comment>